<evidence type="ECO:0000255" key="1">
    <source>
        <dbReference type="HAMAP-Rule" id="MF_00530"/>
    </source>
</evidence>
<proteinExistence type="inferred from homology"/>
<dbReference type="EMBL" id="D11098">
    <property type="protein sequence ID" value="BAA01871.1"/>
    <property type="molecule type" value="Genomic_DNA"/>
</dbReference>
<dbReference type="SMR" id="P69445"/>
<dbReference type="GO" id="GO:0009535">
    <property type="term" value="C:chloroplast thylakoid membrane"/>
    <property type="evidence" value="ECO:0007669"/>
    <property type="project" value="UniProtKB-SubCell"/>
</dbReference>
<dbReference type="GO" id="GO:0045259">
    <property type="term" value="C:proton-transporting ATP synthase complex"/>
    <property type="evidence" value="ECO:0007669"/>
    <property type="project" value="UniProtKB-KW"/>
</dbReference>
<dbReference type="GO" id="GO:0005524">
    <property type="term" value="F:ATP binding"/>
    <property type="evidence" value="ECO:0007669"/>
    <property type="project" value="UniProtKB-UniRule"/>
</dbReference>
<dbReference type="GO" id="GO:0046933">
    <property type="term" value="F:proton-transporting ATP synthase activity, rotational mechanism"/>
    <property type="evidence" value="ECO:0007669"/>
    <property type="project" value="UniProtKB-UniRule"/>
</dbReference>
<dbReference type="CDD" id="cd12152">
    <property type="entry name" value="F1-ATPase_delta"/>
    <property type="match status" value="1"/>
</dbReference>
<dbReference type="FunFam" id="2.60.15.10:FF:000002">
    <property type="entry name" value="ATP synthase epsilon chain, chloroplastic"/>
    <property type="match status" value="1"/>
</dbReference>
<dbReference type="Gene3D" id="6.10.140.480">
    <property type="match status" value="1"/>
</dbReference>
<dbReference type="Gene3D" id="2.60.15.10">
    <property type="entry name" value="F0F1 ATP synthase delta/epsilon subunit, N-terminal"/>
    <property type="match status" value="1"/>
</dbReference>
<dbReference type="HAMAP" id="MF_00530">
    <property type="entry name" value="ATP_synth_epsil_bac"/>
    <property type="match status" value="1"/>
</dbReference>
<dbReference type="InterPro" id="IPR036794">
    <property type="entry name" value="ATP_F1_dsu/esu_C_sf"/>
</dbReference>
<dbReference type="InterPro" id="IPR001469">
    <property type="entry name" value="ATP_synth_F1_dsu/esu"/>
</dbReference>
<dbReference type="InterPro" id="IPR020546">
    <property type="entry name" value="ATP_synth_F1_dsu/esu_N"/>
</dbReference>
<dbReference type="InterPro" id="IPR020547">
    <property type="entry name" value="ATP_synth_F1_esu_C"/>
</dbReference>
<dbReference type="InterPro" id="IPR036771">
    <property type="entry name" value="ATPsynth_dsu/esu_N"/>
</dbReference>
<dbReference type="NCBIfam" id="TIGR01216">
    <property type="entry name" value="ATP_synt_epsi"/>
    <property type="match status" value="1"/>
</dbReference>
<dbReference type="PANTHER" id="PTHR13822">
    <property type="entry name" value="ATP SYNTHASE DELTA/EPSILON CHAIN"/>
    <property type="match status" value="1"/>
</dbReference>
<dbReference type="PANTHER" id="PTHR13822:SF10">
    <property type="entry name" value="ATP SYNTHASE EPSILON CHAIN, CHLOROPLASTIC"/>
    <property type="match status" value="1"/>
</dbReference>
<dbReference type="Pfam" id="PF00401">
    <property type="entry name" value="ATP-synt_DE"/>
    <property type="match status" value="1"/>
</dbReference>
<dbReference type="Pfam" id="PF02823">
    <property type="entry name" value="ATP-synt_DE_N"/>
    <property type="match status" value="1"/>
</dbReference>
<dbReference type="SUPFAM" id="SSF46604">
    <property type="entry name" value="Epsilon subunit of F1F0-ATP synthase C-terminal domain"/>
    <property type="match status" value="1"/>
</dbReference>
<dbReference type="SUPFAM" id="SSF51344">
    <property type="entry name" value="Epsilon subunit of F1F0-ATP synthase N-terminal domain"/>
    <property type="match status" value="1"/>
</dbReference>
<keyword id="KW-0066">ATP synthesis</keyword>
<keyword id="KW-0139">CF(1)</keyword>
<keyword id="KW-0150">Chloroplast</keyword>
<keyword id="KW-0375">Hydrogen ion transport</keyword>
<keyword id="KW-0406">Ion transport</keyword>
<keyword id="KW-0472">Membrane</keyword>
<keyword id="KW-0934">Plastid</keyword>
<keyword id="KW-0793">Thylakoid</keyword>
<keyword id="KW-0813">Transport</keyword>
<reference key="1">
    <citation type="journal article" date="1992" name="Jpn. J. Genet.">
        <title>Variations in chloroplast proteins and nucleotide sequences of three chloroplast genes in Triticum and Aegilops.</title>
        <authorList>
            <person name="Ikeda T."/>
            <person name="Terachi T."/>
            <person name="Tsunewaki K."/>
        </authorList>
    </citation>
    <scope>NUCLEOTIDE SEQUENCE [GENOMIC DNA]</scope>
    <source>
        <tissue>Leaf</tissue>
    </source>
</reference>
<name>ATPE_AEGCO</name>
<comment type="function">
    <text evidence="1">Produces ATP from ADP in the presence of a proton gradient across the membrane.</text>
</comment>
<comment type="subunit">
    <text evidence="1">F-type ATPases have 2 components, CF(1) - the catalytic core - and CF(0) - the membrane proton channel. CF(1) has five subunits: alpha(3), beta(3), gamma(1), delta(1), epsilon(1). CF(0) has three main subunits: a, b and c.</text>
</comment>
<comment type="subcellular location">
    <subcellularLocation>
        <location evidence="1">Plastid</location>
        <location evidence="1">Chloroplast thylakoid membrane</location>
        <topology evidence="1">Peripheral membrane protein</topology>
    </subcellularLocation>
</comment>
<comment type="similarity">
    <text evidence="1">Belongs to the ATPase epsilon chain family.</text>
</comment>
<gene>
    <name evidence="1" type="primary">atpE</name>
</gene>
<protein>
    <recommendedName>
        <fullName evidence="1">ATP synthase epsilon chain, chloroplastic</fullName>
    </recommendedName>
    <alternativeName>
        <fullName evidence="1">ATP synthase F1 sector epsilon subunit</fullName>
    </alternativeName>
    <alternativeName>
        <fullName evidence="1">F-ATPase epsilon subunit</fullName>
    </alternativeName>
</protein>
<geneLocation type="chloroplast"/>
<feature type="chain" id="PRO_0000188250" description="ATP synthase epsilon chain, chloroplastic">
    <location>
        <begin position="1"/>
        <end position="137"/>
    </location>
</feature>
<accession>P69445</accession>
<accession>P00836</accession>
<accession>P20859</accession>
<organism>
    <name type="scientific">Aegilops columnaris</name>
    <name type="common">Goatgrass</name>
    <name type="synonym">Triticum columnare</name>
    <dbReference type="NCBI Taxonomy" id="4493"/>
    <lineage>
        <taxon>Eukaryota</taxon>
        <taxon>Viridiplantae</taxon>
        <taxon>Streptophyta</taxon>
        <taxon>Embryophyta</taxon>
        <taxon>Tracheophyta</taxon>
        <taxon>Spermatophyta</taxon>
        <taxon>Magnoliopsida</taxon>
        <taxon>Liliopsida</taxon>
        <taxon>Poales</taxon>
        <taxon>Poaceae</taxon>
        <taxon>BOP clade</taxon>
        <taxon>Pooideae</taxon>
        <taxon>Triticodae</taxon>
        <taxon>Triticeae</taxon>
        <taxon>Triticinae</taxon>
        <taxon>Aegilops</taxon>
    </lineage>
</organism>
<sequence length="137" mass="15218">MKLNLYVLTPKRIIWDCEVKEIILSTNSGQIGVLPNHAPINTAVDMGPLRIRLLNDQWLTAVLWSGFARIVNNEIIILGNDAELGSDIDPEEAQKALEIAEANLSKAEGTKDLVEAKLALRRARIRIEAVNWIPPSN</sequence>